<comment type="function">
    <text evidence="1">Involved in regulation of DNA replication.</text>
</comment>
<comment type="disruption phenotype">
    <text evidence="2">Not essential for normal growth.</text>
</comment>
<comment type="similarity">
    <text evidence="1">Belongs to the CDC6/cdc18 family.</text>
</comment>
<comment type="sequence caution" evidence="3">
    <conflict type="erroneous initiation">
        <sequence resource="EMBL-CDS" id="AAG20915"/>
    </conflict>
    <text>Extended N-terminus.</text>
</comment>
<protein>
    <recommendedName>
        <fullName evidence="1">ORC1-type DNA replication protein 5</fullName>
    </recommendedName>
</protein>
<reference key="1">
    <citation type="journal article" date="2000" name="Proc. Natl. Acad. Sci. U.S.A.">
        <title>Genome sequence of Halobacterium species NRC-1.</title>
        <authorList>
            <person name="Ng W.V."/>
            <person name="Kennedy S.P."/>
            <person name="Mahairas G.G."/>
            <person name="Berquist B."/>
            <person name="Pan M."/>
            <person name="Shukla H.D."/>
            <person name="Lasky S.R."/>
            <person name="Baliga N.S."/>
            <person name="Thorsson V."/>
            <person name="Sbrogna J."/>
            <person name="Swartzell S."/>
            <person name="Weir D."/>
            <person name="Hall J."/>
            <person name="Dahl T.A."/>
            <person name="Welti R."/>
            <person name="Goo Y.A."/>
            <person name="Leithauser B."/>
            <person name="Keller K."/>
            <person name="Cruz R."/>
            <person name="Danson M.J."/>
            <person name="Hough D.W."/>
            <person name="Maddocks D.G."/>
            <person name="Jablonski P.E."/>
            <person name="Krebs M.P."/>
            <person name="Angevine C.M."/>
            <person name="Dale H."/>
            <person name="Isenbarger T.A."/>
            <person name="Peck R.F."/>
            <person name="Pohlschroder M."/>
            <person name="Spudich J.L."/>
            <person name="Jung K.-H."/>
            <person name="Alam M."/>
            <person name="Freitas T."/>
            <person name="Hou S."/>
            <person name="Daniels C.J."/>
            <person name="Dennis P.P."/>
            <person name="Omer A.D."/>
            <person name="Ebhardt H."/>
            <person name="Lowe T.M."/>
            <person name="Liang P."/>
            <person name="Riley M."/>
            <person name="Hood L."/>
            <person name="DasSarma S."/>
        </authorList>
    </citation>
    <scope>NUCLEOTIDE SEQUENCE [LARGE SCALE GENOMIC DNA]</scope>
    <source>
        <strain>ATCC 700922 / JCM 11081 / NRC-1</strain>
    </source>
</reference>
<reference key="2">
    <citation type="journal article" date="2007" name="BMC Genet.">
        <title>Essential and non-essential DNA replication genes in the model halophilic Archaeon, Halobacterium sp. NRC-1.</title>
        <authorList>
            <person name="Berquist B.R."/>
            <person name="DasSarma P."/>
            <person name="DasSarma S."/>
        </authorList>
    </citation>
    <scope>DISRUPTION PHENOTYPE</scope>
    <source>
        <strain>ATCC 700922 / JCM 11081 / NRC-1</strain>
    </source>
</reference>
<organism>
    <name type="scientific">Halobacterium salinarum (strain ATCC 700922 / JCM 11081 / NRC-1)</name>
    <name type="common">Halobacterium halobium</name>
    <dbReference type="NCBI Taxonomy" id="64091"/>
    <lineage>
        <taxon>Archaea</taxon>
        <taxon>Methanobacteriati</taxon>
        <taxon>Methanobacteriota</taxon>
        <taxon>Stenosarchaea group</taxon>
        <taxon>Halobacteria</taxon>
        <taxon>Halobacteriales</taxon>
        <taxon>Halobacteriaceae</taxon>
        <taxon>Halobacterium</taxon>
        <taxon>Halobacterium salinarum NRC-34001</taxon>
    </lineage>
</organism>
<name>CDC65_HALSA</name>
<sequence>MLHDDGDASVFVNRDLVEPDTIIDEERIVGRDEQLESVVSFLKPTLQGNRPPNMLLYGPAGTGKSLIIGAVTQQIIELCHSKGERFGVVQVNCQPINTLDQAVYELVQTVASDVGIEPGVPETGVSTKRKYRRLYDLINEHYDSVIFILDEIDLLVGRRANDEPAYSKLLYQLSRASNTNDIEGQVSVAALTNDPKFMENIDGRAESSFNPRDIYFPDYDATQLRQILENRRDAFRQDALTDDVLPLVSAFAAQSHGDARKAIDLFRGAGDLADEQGDQTVREDHVRESQDEIDKDRSLKLIAGLTTQKKISLYATAAVAHCSSATRNSVPSPVGFQVYQWVTEEIDADQMTRETYVKYVKELSTYGLVSTARKSRGRGGGMYMDFTFRGDPESMMHRVVDDTRLERVGTESERLHAVVNAQLREFEE</sequence>
<geneLocation type="plasmid">
    <name>pNRC200</name>
</geneLocation>
<gene>
    <name type="primary">orc5</name>
    <name type="ordered locus">VNG_6272G</name>
</gene>
<dbReference type="EMBL" id="AE004438">
    <property type="protein sequence ID" value="AAG20915.1"/>
    <property type="status" value="ALT_INIT"/>
    <property type="molecule type" value="Genomic_DNA"/>
</dbReference>
<dbReference type="SMR" id="Q9HHR1"/>
<dbReference type="KEGG" id="hal:VNG_6272G"/>
<dbReference type="PATRIC" id="fig|64091.14.peg.2262"/>
<dbReference type="HOGENOM" id="CLU_025112_2_0_2"/>
<dbReference type="InParanoid" id="Q9HHR1"/>
<dbReference type="OrthoDB" id="195574at2157"/>
<dbReference type="Proteomes" id="UP000000554">
    <property type="component" value="Plasmid pNRC200"/>
</dbReference>
<dbReference type="GO" id="GO:0005524">
    <property type="term" value="F:ATP binding"/>
    <property type="evidence" value="ECO:0007669"/>
    <property type="project" value="UniProtKB-UniRule"/>
</dbReference>
<dbReference type="GO" id="GO:0016887">
    <property type="term" value="F:ATP hydrolysis activity"/>
    <property type="evidence" value="ECO:0007669"/>
    <property type="project" value="InterPro"/>
</dbReference>
<dbReference type="GO" id="GO:0006260">
    <property type="term" value="P:DNA replication"/>
    <property type="evidence" value="ECO:0007669"/>
    <property type="project" value="UniProtKB-UniRule"/>
</dbReference>
<dbReference type="CDD" id="cd00009">
    <property type="entry name" value="AAA"/>
    <property type="match status" value="1"/>
</dbReference>
<dbReference type="CDD" id="cd08768">
    <property type="entry name" value="Cdc6_C"/>
    <property type="match status" value="1"/>
</dbReference>
<dbReference type="CDD" id="cd18139">
    <property type="entry name" value="HLD_clamp_RarA"/>
    <property type="match status" value="1"/>
</dbReference>
<dbReference type="FunFam" id="1.10.8.60:FF:000073">
    <property type="entry name" value="ORC1-type DNA replication protein"/>
    <property type="match status" value="1"/>
</dbReference>
<dbReference type="FunFam" id="3.40.50.300:FF:000930">
    <property type="entry name" value="ORC1-type DNA replication protein"/>
    <property type="match status" value="1"/>
</dbReference>
<dbReference type="Gene3D" id="1.10.8.60">
    <property type="match status" value="1"/>
</dbReference>
<dbReference type="Gene3D" id="3.40.50.300">
    <property type="entry name" value="P-loop containing nucleotide triphosphate hydrolases"/>
    <property type="match status" value="1"/>
</dbReference>
<dbReference type="Gene3D" id="1.10.10.10">
    <property type="entry name" value="Winged helix-like DNA-binding domain superfamily/Winged helix DNA-binding domain"/>
    <property type="match status" value="1"/>
</dbReference>
<dbReference type="HAMAP" id="MF_01407">
    <property type="entry name" value="ORC1_type_DNA_replic_protein"/>
    <property type="match status" value="1"/>
</dbReference>
<dbReference type="InterPro" id="IPR003593">
    <property type="entry name" value="AAA+_ATPase"/>
</dbReference>
<dbReference type="InterPro" id="IPR041664">
    <property type="entry name" value="AAA_16"/>
</dbReference>
<dbReference type="InterPro" id="IPR015163">
    <property type="entry name" value="Cdc6_C"/>
</dbReference>
<dbReference type="InterPro" id="IPR055237">
    <property type="entry name" value="Cdc6_lid"/>
</dbReference>
<dbReference type="InterPro" id="IPR050311">
    <property type="entry name" value="ORC1/CDC6"/>
</dbReference>
<dbReference type="InterPro" id="IPR014277">
    <property type="entry name" value="Orc1/Cdc6_arc"/>
</dbReference>
<dbReference type="InterPro" id="IPR027417">
    <property type="entry name" value="P-loop_NTPase"/>
</dbReference>
<dbReference type="InterPro" id="IPR036388">
    <property type="entry name" value="WH-like_DNA-bd_sf"/>
</dbReference>
<dbReference type="InterPro" id="IPR036390">
    <property type="entry name" value="WH_DNA-bd_sf"/>
</dbReference>
<dbReference type="NCBIfam" id="TIGR02928">
    <property type="entry name" value="orc1/cdc6 family replication initiation protein"/>
    <property type="match status" value="1"/>
</dbReference>
<dbReference type="PANTHER" id="PTHR10763">
    <property type="entry name" value="CELL DIVISION CONTROL PROTEIN 6-RELATED"/>
    <property type="match status" value="1"/>
</dbReference>
<dbReference type="PANTHER" id="PTHR10763:SF22">
    <property type="entry name" value="ORC1-TYPE DNA REPLICATION PROTEIN"/>
    <property type="match status" value="1"/>
</dbReference>
<dbReference type="Pfam" id="PF13191">
    <property type="entry name" value="AAA_16"/>
    <property type="match status" value="1"/>
</dbReference>
<dbReference type="Pfam" id="PF09079">
    <property type="entry name" value="Cdc6_C"/>
    <property type="match status" value="1"/>
</dbReference>
<dbReference type="Pfam" id="PF22703">
    <property type="entry name" value="Cdc6_lid"/>
    <property type="match status" value="1"/>
</dbReference>
<dbReference type="SMART" id="SM00382">
    <property type="entry name" value="AAA"/>
    <property type="match status" value="1"/>
</dbReference>
<dbReference type="SUPFAM" id="SSF52540">
    <property type="entry name" value="P-loop containing nucleoside triphosphate hydrolases"/>
    <property type="match status" value="1"/>
</dbReference>
<dbReference type="SUPFAM" id="SSF46785">
    <property type="entry name" value="Winged helix' DNA-binding domain"/>
    <property type="match status" value="1"/>
</dbReference>
<evidence type="ECO:0000255" key="1">
    <source>
        <dbReference type="HAMAP-Rule" id="MF_01407"/>
    </source>
</evidence>
<evidence type="ECO:0000269" key="2">
    <source>
    </source>
</evidence>
<evidence type="ECO:0000305" key="3"/>
<proteinExistence type="inferred from homology"/>
<accession>Q9HHR1</accession>
<feature type="chain" id="PRO_0000151000" description="ORC1-type DNA replication protein 5">
    <location>
        <begin position="1"/>
        <end position="428"/>
    </location>
</feature>
<feature type="binding site" evidence="1">
    <location>
        <begin position="62"/>
        <end position="66"/>
    </location>
    <ligand>
        <name>ATP</name>
        <dbReference type="ChEBI" id="CHEBI:30616"/>
    </ligand>
</feature>
<feature type="binding site" evidence="1">
    <location>
        <position position="219"/>
    </location>
    <ligand>
        <name>ATP</name>
        <dbReference type="ChEBI" id="CHEBI:30616"/>
    </ligand>
</feature>
<feature type="binding site" evidence="1">
    <location>
        <position position="231"/>
    </location>
    <ligand>
        <name>ATP</name>
        <dbReference type="ChEBI" id="CHEBI:30616"/>
    </ligand>
</feature>
<keyword id="KW-0067">ATP-binding</keyword>
<keyword id="KW-0235">DNA replication</keyword>
<keyword id="KW-0547">Nucleotide-binding</keyword>
<keyword id="KW-0614">Plasmid</keyword>
<keyword id="KW-1185">Reference proteome</keyword>